<name>RL13_PSEA6</name>
<organism>
    <name type="scientific">Pseudoalteromonas atlantica (strain T6c / ATCC BAA-1087)</name>
    <dbReference type="NCBI Taxonomy" id="3042615"/>
    <lineage>
        <taxon>Bacteria</taxon>
        <taxon>Pseudomonadati</taxon>
        <taxon>Pseudomonadota</taxon>
        <taxon>Gammaproteobacteria</taxon>
        <taxon>Alteromonadales</taxon>
        <taxon>Alteromonadaceae</taxon>
        <taxon>Paraglaciecola</taxon>
    </lineage>
</organism>
<reference key="1">
    <citation type="submission" date="2006-06" db="EMBL/GenBank/DDBJ databases">
        <title>Complete sequence of Pseudoalteromonas atlantica T6c.</title>
        <authorList>
            <consortium name="US DOE Joint Genome Institute"/>
            <person name="Copeland A."/>
            <person name="Lucas S."/>
            <person name="Lapidus A."/>
            <person name="Barry K."/>
            <person name="Detter J.C."/>
            <person name="Glavina del Rio T."/>
            <person name="Hammon N."/>
            <person name="Israni S."/>
            <person name="Dalin E."/>
            <person name="Tice H."/>
            <person name="Pitluck S."/>
            <person name="Saunders E."/>
            <person name="Brettin T."/>
            <person name="Bruce D."/>
            <person name="Han C."/>
            <person name="Tapia R."/>
            <person name="Gilna P."/>
            <person name="Schmutz J."/>
            <person name="Larimer F."/>
            <person name="Land M."/>
            <person name="Hauser L."/>
            <person name="Kyrpides N."/>
            <person name="Kim E."/>
            <person name="Karls A.C."/>
            <person name="Bartlett D."/>
            <person name="Higgins B.P."/>
            <person name="Richardson P."/>
        </authorList>
    </citation>
    <scope>NUCLEOTIDE SEQUENCE [LARGE SCALE GENOMIC DNA]</scope>
    <source>
        <strain>T6c / ATCC BAA-1087</strain>
    </source>
</reference>
<accession>Q15PI3</accession>
<comment type="function">
    <text evidence="1">This protein is one of the early assembly proteins of the 50S ribosomal subunit, although it is not seen to bind rRNA by itself. It is important during the early stages of 50S assembly.</text>
</comment>
<comment type="subunit">
    <text evidence="1">Part of the 50S ribosomal subunit.</text>
</comment>
<comment type="similarity">
    <text evidence="1">Belongs to the universal ribosomal protein uL13 family.</text>
</comment>
<gene>
    <name evidence="1" type="primary">rplM</name>
    <name type="ordered locus">Patl_3703</name>
</gene>
<feature type="chain" id="PRO_0000261767" description="Large ribosomal subunit protein uL13">
    <location>
        <begin position="1"/>
        <end position="142"/>
    </location>
</feature>
<evidence type="ECO:0000255" key="1">
    <source>
        <dbReference type="HAMAP-Rule" id="MF_01366"/>
    </source>
</evidence>
<evidence type="ECO:0000305" key="2"/>
<dbReference type="EMBL" id="CP000388">
    <property type="protein sequence ID" value="ABG42205.1"/>
    <property type="molecule type" value="Genomic_DNA"/>
</dbReference>
<dbReference type="RefSeq" id="WP_006991012.1">
    <property type="nucleotide sequence ID" value="NC_008228.1"/>
</dbReference>
<dbReference type="SMR" id="Q15PI3"/>
<dbReference type="STRING" id="342610.Patl_3703"/>
<dbReference type="KEGG" id="pat:Patl_3703"/>
<dbReference type="eggNOG" id="COG0102">
    <property type="taxonomic scope" value="Bacteria"/>
</dbReference>
<dbReference type="HOGENOM" id="CLU_082184_2_2_6"/>
<dbReference type="OrthoDB" id="9801330at2"/>
<dbReference type="Proteomes" id="UP000001981">
    <property type="component" value="Chromosome"/>
</dbReference>
<dbReference type="GO" id="GO:0022625">
    <property type="term" value="C:cytosolic large ribosomal subunit"/>
    <property type="evidence" value="ECO:0007669"/>
    <property type="project" value="TreeGrafter"/>
</dbReference>
<dbReference type="GO" id="GO:0003729">
    <property type="term" value="F:mRNA binding"/>
    <property type="evidence" value="ECO:0007669"/>
    <property type="project" value="TreeGrafter"/>
</dbReference>
<dbReference type="GO" id="GO:0003735">
    <property type="term" value="F:structural constituent of ribosome"/>
    <property type="evidence" value="ECO:0007669"/>
    <property type="project" value="InterPro"/>
</dbReference>
<dbReference type="GO" id="GO:0017148">
    <property type="term" value="P:negative regulation of translation"/>
    <property type="evidence" value="ECO:0007669"/>
    <property type="project" value="TreeGrafter"/>
</dbReference>
<dbReference type="GO" id="GO:0006412">
    <property type="term" value="P:translation"/>
    <property type="evidence" value="ECO:0007669"/>
    <property type="project" value="UniProtKB-UniRule"/>
</dbReference>
<dbReference type="CDD" id="cd00392">
    <property type="entry name" value="Ribosomal_L13"/>
    <property type="match status" value="1"/>
</dbReference>
<dbReference type="FunFam" id="3.90.1180.10:FF:000001">
    <property type="entry name" value="50S ribosomal protein L13"/>
    <property type="match status" value="1"/>
</dbReference>
<dbReference type="Gene3D" id="3.90.1180.10">
    <property type="entry name" value="Ribosomal protein L13"/>
    <property type="match status" value="1"/>
</dbReference>
<dbReference type="HAMAP" id="MF_01366">
    <property type="entry name" value="Ribosomal_uL13"/>
    <property type="match status" value="1"/>
</dbReference>
<dbReference type="InterPro" id="IPR005822">
    <property type="entry name" value="Ribosomal_uL13"/>
</dbReference>
<dbReference type="InterPro" id="IPR005823">
    <property type="entry name" value="Ribosomal_uL13_bac-type"/>
</dbReference>
<dbReference type="InterPro" id="IPR023563">
    <property type="entry name" value="Ribosomal_uL13_CS"/>
</dbReference>
<dbReference type="InterPro" id="IPR036899">
    <property type="entry name" value="Ribosomal_uL13_sf"/>
</dbReference>
<dbReference type="NCBIfam" id="TIGR01066">
    <property type="entry name" value="rplM_bact"/>
    <property type="match status" value="1"/>
</dbReference>
<dbReference type="PANTHER" id="PTHR11545:SF2">
    <property type="entry name" value="LARGE RIBOSOMAL SUBUNIT PROTEIN UL13M"/>
    <property type="match status" value="1"/>
</dbReference>
<dbReference type="PANTHER" id="PTHR11545">
    <property type="entry name" value="RIBOSOMAL PROTEIN L13"/>
    <property type="match status" value="1"/>
</dbReference>
<dbReference type="Pfam" id="PF00572">
    <property type="entry name" value="Ribosomal_L13"/>
    <property type="match status" value="1"/>
</dbReference>
<dbReference type="PIRSF" id="PIRSF002181">
    <property type="entry name" value="Ribosomal_L13"/>
    <property type="match status" value="1"/>
</dbReference>
<dbReference type="SUPFAM" id="SSF52161">
    <property type="entry name" value="Ribosomal protein L13"/>
    <property type="match status" value="1"/>
</dbReference>
<dbReference type="PROSITE" id="PS00783">
    <property type="entry name" value="RIBOSOMAL_L13"/>
    <property type="match status" value="1"/>
</dbReference>
<keyword id="KW-0687">Ribonucleoprotein</keyword>
<keyword id="KW-0689">Ribosomal protein</keyword>
<proteinExistence type="inferred from homology"/>
<sequence>MKTFVAKPETVKREWYVVDAADKTLGRLATEIASRLRGKHKPEYTPHVDTGDYIVVINAEKVVVTGNKAKGKMYYSHTGYPGGLKETNFEKLQAFKPEMIIEKAVKGMLPKGPLGRDMFRKMKVFAGPEHKHAAQQPQVLDI</sequence>
<protein>
    <recommendedName>
        <fullName evidence="1">Large ribosomal subunit protein uL13</fullName>
    </recommendedName>
    <alternativeName>
        <fullName evidence="2">50S ribosomal protein L13</fullName>
    </alternativeName>
</protein>